<proteinExistence type="inferred from homology"/>
<gene>
    <name evidence="1" type="primary">apt</name>
    <name type="ordered locus">ckrop_1024</name>
</gene>
<evidence type="ECO:0000255" key="1">
    <source>
        <dbReference type="HAMAP-Rule" id="MF_00004"/>
    </source>
</evidence>
<feature type="chain" id="PRO_1000201658" description="Adenine phosphoribosyltransferase">
    <location>
        <begin position="1"/>
        <end position="183"/>
    </location>
</feature>
<name>APT_CORK4</name>
<reference key="1">
    <citation type="journal article" date="2008" name="J. Biotechnol.">
        <title>Ultrafast pyrosequencing of Corynebacterium kroppenstedtii DSM44385 revealed insights into the physiology of a lipophilic corynebacterium that lacks mycolic acids.</title>
        <authorList>
            <person name="Tauch A."/>
            <person name="Schneider J."/>
            <person name="Szczepanowski R."/>
            <person name="Tilker A."/>
            <person name="Viehoever P."/>
            <person name="Gartemann K.-H."/>
            <person name="Arnold W."/>
            <person name="Blom J."/>
            <person name="Brinkrolf K."/>
            <person name="Brune I."/>
            <person name="Goetker S."/>
            <person name="Weisshaar B."/>
            <person name="Goesmann A."/>
            <person name="Droege M."/>
            <person name="Puehler A."/>
        </authorList>
    </citation>
    <scope>NUCLEOTIDE SEQUENCE [LARGE SCALE GENOMIC DNA]</scope>
    <source>
        <strain>DSM 44385 / JCM 11950 / CIP 105744 / CCUG 35717</strain>
    </source>
</reference>
<sequence length="183" mass="19261">MTDSEYSSAADAVANLVRRVPGFPSEGVVFEDLTPVLADAGAFRLIVDELAEAARSYHADIIGGLDARGFLLGSAVAYQLGLGILAVRKEGKLPPPVFHRGYDLEYGHAALEIPREGLNIQGKNIVLIDDVLATGGTLCASRALLEEAGANVAGLAVILEVEALEGRKRLADLPLTVVGERSE</sequence>
<dbReference type="EC" id="2.4.2.7" evidence="1"/>
<dbReference type="EMBL" id="CP001620">
    <property type="protein sequence ID" value="ACR17777.1"/>
    <property type="molecule type" value="Genomic_DNA"/>
</dbReference>
<dbReference type="RefSeq" id="WP_012731664.1">
    <property type="nucleotide sequence ID" value="NC_012704.1"/>
</dbReference>
<dbReference type="SMR" id="C4LIX2"/>
<dbReference type="STRING" id="645127.ckrop_1024"/>
<dbReference type="KEGG" id="ckp:ckrop_1024"/>
<dbReference type="eggNOG" id="COG0503">
    <property type="taxonomic scope" value="Bacteria"/>
</dbReference>
<dbReference type="HOGENOM" id="CLU_063339_3_3_11"/>
<dbReference type="OrthoDB" id="9803963at2"/>
<dbReference type="UniPathway" id="UPA00588">
    <property type="reaction ID" value="UER00646"/>
</dbReference>
<dbReference type="Proteomes" id="UP000001473">
    <property type="component" value="Chromosome"/>
</dbReference>
<dbReference type="GO" id="GO:0005737">
    <property type="term" value="C:cytoplasm"/>
    <property type="evidence" value="ECO:0007669"/>
    <property type="project" value="UniProtKB-SubCell"/>
</dbReference>
<dbReference type="GO" id="GO:0002055">
    <property type="term" value="F:adenine binding"/>
    <property type="evidence" value="ECO:0007669"/>
    <property type="project" value="TreeGrafter"/>
</dbReference>
<dbReference type="GO" id="GO:0003999">
    <property type="term" value="F:adenine phosphoribosyltransferase activity"/>
    <property type="evidence" value="ECO:0007669"/>
    <property type="project" value="UniProtKB-UniRule"/>
</dbReference>
<dbReference type="GO" id="GO:0016208">
    <property type="term" value="F:AMP binding"/>
    <property type="evidence" value="ECO:0007669"/>
    <property type="project" value="TreeGrafter"/>
</dbReference>
<dbReference type="GO" id="GO:0006168">
    <property type="term" value="P:adenine salvage"/>
    <property type="evidence" value="ECO:0007669"/>
    <property type="project" value="InterPro"/>
</dbReference>
<dbReference type="GO" id="GO:0044209">
    <property type="term" value="P:AMP salvage"/>
    <property type="evidence" value="ECO:0007669"/>
    <property type="project" value="UniProtKB-UniRule"/>
</dbReference>
<dbReference type="GO" id="GO:0006166">
    <property type="term" value="P:purine ribonucleoside salvage"/>
    <property type="evidence" value="ECO:0007669"/>
    <property type="project" value="UniProtKB-KW"/>
</dbReference>
<dbReference type="CDD" id="cd06223">
    <property type="entry name" value="PRTases_typeI"/>
    <property type="match status" value="1"/>
</dbReference>
<dbReference type="FunFam" id="3.40.50.2020:FF:000021">
    <property type="entry name" value="Adenine phosphoribosyltransferase"/>
    <property type="match status" value="1"/>
</dbReference>
<dbReference type="Gene3D" id="3.40.50.2020">
    <property type="match status" value="1"/>
</dbReference>
<dbReference type="HAMAP" id="MF_00004">
    <property type="entry name" value="Aden_phosphoribosyltr"/>
    <property type="match status" value="1"/>
</dbReference>
<dbReference type="InterPro" id="IPR005764">
    <property type="entry name" value="Ade_phspho_trans"/>
</dbReference>
<dbReference type="InterPro" id="IPR000836">
    <property type="entry name" value="PRibTrfase_dom"/>
</dbReference>
<dbReference type="InterPro" id="IPR029057">
    <property type="entry name" value="PRTase-like"/>
</dbReference>
<dbReference type="InterPro" id="IPR050054">
    <property type="entry name" value="UPRTase/APRTase"/>
</dbReference>
<dbReference type="NCBIfam" id="NF002634">
    <property type="entry name" value="PRK02304.1-3"/>
    <property type="match status" value="1"/>
</dbReference>
<dbReference type="NCBIfam" id="NF002636">
    <property type="entry name" value="PRK02304.1-5"/>
    <property type="match status" value="1"/>
</dbReference>
<dbReference type="PANTHER" id="PTHR32315">
    <property type="entry name" value="ADENINE PHOSPHORIBOSYLTRANSFERASE"/>
    <property type="match status" value="1"/>
</dbReference>
<dbReference type="PANTHER" id="PTHR32315:SF3">
    <property type="entry name" value="ADENINE PHOSPHORIBOSYLTRANSFERASE"/>
    <property type="match status" value="1"/>
</dbReference>
<dbReference type="Pfam" id="PF00156">
    <property type="entry name" value="Pribosyltran"/>
    <property type="match status" value="1"/>
</dbReference>
<dbReference type="SUPFAM" id="SSF53271">
    <property type="entry name" value="PRTase-like"/>
    <property type="match status" value="1"/>
</dbReference>
<dbReference type="PROSITE" id="PS00103">
    <property type="entry name" value="PUR_PYR_PR_TRANSFER"/>
    <property type="match status" value="1"/>
</dbReference>
<accession>C4LIX2</accession>
<comment type="function">
    <text evidence="1">Catalyzes a salvage reaction resulting in the formation of AMP, that is energically less costly than de novo synthesis.</text>
</comment>
<comment type="catalytic activity">
    <reaction evidence="1">
        <text>AMP + diphosphate = 5-phospho-alpha-D-ribose 1-diphosphate + adenine</text>
        <dbReference type="Rhea" id="RHEA:16609"/>
        <dbReference type="ChEBI" id="CHEBI:16708"/>
        <dbReference type="ChEBI" id="CHEBI:33019"/>
        <dbReference type="ChEBI" id="CHEBI:58017"/>
        <dbReference type="ChEBI" id="CHEBI:456215"/>
        <dbReference type="EC" id="2.4.2.7"/>
    </reaction>
</comment>
<comment type="pathway">
    <text evidence="1">Purine metabolism; AMP biosynthesis via salvage pathway; AMP from adenine: step 1/1.</text>
</comment>
<comment type="subunit">
    <text evidence="1">Homodimer.</text>
</comment>
<comment type="subcellular location">
    <subcellularLocation>
        <location evidence="1">Cytoplasm</location>
    </subcellularLocation>
</comment>
<comment type="similarity">
    <text evidence="1">Belongs to the purine/pyrimidine phosphoribosyltransferase family.</text>
</comment>
<organism>
    <name type="scientific">Corynebacterium kroppenstedtii (strain DSM 44385 / JCM 11950 / CIP 105744 / CCUG 35717)</name>
    <dbReference type="NCBI Taxonomy" id="645127"/>
    <lineage>
        <taxon>Bacteria</taxon>
        <taxon>Bacillati</taxon>
        <taxon>Actinomycetota</taxon>
        <taxon>Actinomycetes</taxon>
        <taxon>Mycobacteriales</taxon>
        <taxon>Corynebacteriaceae</taxon>
        <taxon>Corynebacterium</taxon>
    </lineage>
</organism>
<protein>
    <recommendedName>
        <fullName evidence="1">Adenine phosphoribosyltransferase</fullName>
        <shortName evidence="1">APRT</shortName>
        <ecNumber evidence="1">2.4.2.7</ecNumber>
    </recommendedName>
</protein>
<keyword id="KW-0963">Cytoplasm</keyword>
<keyword id="KW-0328">Glycosyltransferase</keyword>
<keyword id="KW-0660">Purine salvage</keyword>
<keyword id="KW-1185">Reference proteome</keyword>
<keyword id="KW-0808">Transferase</keyword>